<reference key="1">
    <citation type="journal article" date="2004" name="J. Bacteriol.">
        <title>Comparative genomics of two Leptospira interrogans serovars reveals novel insights into physiology and pathogenesis.</title>
        <authorList>
            <person name="Nascimento A.L.T.O."/>
            <person name="Ko A.I."/>
            <person name="Martins E.A.L."/>
            <person name="Monteiro-Vitorello C.B."/>
            <person name="Ho P.L."/>
            <person name="Haake D.A."/>
            <person name="Verjovski-Almeida S."/>
            <person name="Hartskeerl R.A."/>
            <person name="Marques M.V."/>
            <person name="Oliveira M.C."/>
            <person name="Menck C.F.M."/>
            <person name="Leite L.C.C."/>
            <person name="Carrer H."/>
            <person name="Coutinho L.L."/>
            <person name="Degrave W.M."/>
            <person name="Dellagostin O.A."/>
            <person name="El-Dorry H."/>
            <person name="Ferro E.S."/>
            <person name="Ferro M.I.T."/>
            <person name="Furlan L.R."/>
            <person name="Gamberini M."/>
            <person name="Giglioti E.A."/>
            <person name="Goes-Neto A."/>
            <person name="Goldman G.H."/>
            <person name="Goldman M.H.S."/>
            <person name="Harakava R."/>
            <person name="Jeronimo S.M.B."/>
            <person name="Junqueira-de-Azevedo I.L.M."/>
            <person name="Kimura E.T."/>
            <person name="Kuramae E.E."/>
            <person name="Lemos E.G.M."/>
            <person name="Lemos M.V.F."/>
            <person name="Marino C.L."/>
            <person name="Nunes L.R."/>
            <person name="de Oliveira R.C."/>
            <person name="Pereira G.G."/>
            <person name="Reis M.S."/>
            <person name="Schriefer A."/>
            <person name="Siqueira W.J."/>
            <person name="Sommer P."/>
            <person name="Tsai S.M."/>
            <person name="Simpson A.J.G."/>
            <person name="Ferro J.A."/>
            <person name="Camargo L.E.A."/>
            <person name="Kitajima J.P."/>
            <person name="Setubal J.C."/>
            <person name="Van Sluys M.A."/>
        </authorList>
    </citation>
    <scope>NUCLEOTIDE SEQUENCE [LARGE SCALE GENOMIC DNA]</scope>
    <source>
        <strain>Fiocruz L1-130</strain>
    </source>
</reference>
<comment type="function">
    <text evidence="1">Binds directly to 23S rRNA. The L1 stalk is quite mobile in the ribosome, and is involved in E site tRNA release.</text>
</comment>
<comment type="function">
    <text evidence="1">Protein L1 is also a translational repressor protein, it controls the translation of the L11 operon by binding to its mRNA.</text>
</comment>
<comment type="subunit">
    <text evidence="1">Part of the 50S ribosomal subunit.</text>
</comment>
<comment type="similarity">
    <text evidence="1">Belongs to the universal ribosomal protein uL1 family.</text>
</comment>
<dbReference type="EMBL" id="AE016823">
    <property type="protein sequence ID" value="AAS69367.1"/>
    <property type="molecule type" value="Genomic_DNA"/>
</dbReference>
<dbReference type="RefSeq" id="WP_001188789.1">
    <property type="nucleotide sequence ID" value="NC_005823.1"/>
</dbReference>
<dbReference type="SMR" id="Q72UB1"/>
<dbReference type="GeneID" id="61144090"/>
<dbReference type="KEGG" id="lic:LIC_10750"/>
<dbReference type="HOGENOM" id="CLU_062853_0_0_12"/>
<dbReference type="Proteomes" id="UP000007037">
    <property type="component" value="Chromosome I"/>
</dbReference>
<dbReference type="GO" id="GO:0015934">
    <property type="term" value="C:large ribosomal subunit"/>
    <property type="evidence" value="ECO:0007669"/>
    <property type="project" value="InterPro"/>
</dbReference>
<dbReference type="GO" id="GO:0019843">
    <property type="term" value="F:rRNA binding"/>
    <property type="evidence" value="ECO:0007669"/>
    <property type="project" value="UniProtKB-UniRule"/>
</dbReference>
<dbReference type="GO" id="GO:0003735">
    <property type="term" value="F:structural constituent of ribosome"/>
    <property type="evidence" value="ECO:0007669"/>
    <property type="project" value="InterPro"/>
</dbReference>
<dbReference type="GO" id="GO:0000049">
    <property type="term" value="F:tRNA binding"/>
    <property type="evidence" value="ECO:0007669"/>
    <property type="project" value="UniProtKB-KW"/>
</dbReference>
<dbReference type="GO" id="GO:0006417">
    <property type="term" value="P:regulation of translation"/>
    <property type="evidence" value="ECO:0007669"/>
    <property type="project" value="UniProtKB-KW"/>
</dbReference>
<dbReference type="GO" id="GO:0006412">
    <property type="term" value="P:translation"/>
    <property type="evidence" value="ECO:0007669"/>
    <property type="project" value="UniProtKB-UniRule"/>
</dbReference>
<dbReference type="CDD" id="cd00403">
    <property type="entry name" value="Ribosomal_L1"/>
    <property type="match status" value="1"/>
</dbReference>
<dbReference type="FunFam" id="3.40.50.790:FF:000001">
    <property type="entry name" value="50S ribosomal protein L1"/>
    <property type="match status" value="1"/>
</dbReference>
<dbReference type="Gene3D" id="3.30.190.20">
    <property type="match status" value="1"/>
</dbReference>
<dbReference type="Gene3D" id="3.40.50.790">
    <property type="match status" value="1"/>
</dbReference>
<dbReference type="HAMAP" id="MF_01318_B">
    <property type="entry name" value="Ribosomal_uL1_B"/>
    <property type="match status" value="1"/>
</dbReference>
<dbReference type="InterPro" id="IPR005878">
    <property type="entry name" value="Ribosom_uL1_bac-type"/>
</dbReference>
<dbReference type="InterPro" id="IPR002143">
    <property type="entry name" value="Ribosomal_uL1"/>
</dbReference>
<dbReference type="InterPro" id="IPR023674">
    <property type="entry name" value="Ribosomal_uL1-like"/>
</dbReference>
<dbReference type="InterPro" id="IPR028364">
    <property type="entry name" value="Ribosomal_uL1/biogenesis"/>
</dbReference>
<dbReference type="InterPro" id="IPR016095">
    <property type="entry name" value="Ribosomal_uL1_3-a/b-sand"/>
</dbReference>
<dbReference type="InterPro" id="IPR023673">
    <property type="entry name" value="Ribosomal_uL1_CS"/>
</dbReference>
<dbReference type="NCBIfam" id="TIGR01169">
    <property type="entry name" value="rplA_bact"/>
    <property type="match status" value="1"/>
</dbReference>
<dbReference type="PANTHER" id="PTHR36427">
    <property type="entry name" value="54S RIBOSOMAL PROTEIN L1, MITOCHONDRIAL"/>
    <property type="match status" value="1"/>
</dbReference>
<dbReference type="PANTHER" id="PTHR36427:SF3">
    <property type="entry name" value="LARGE RIBOSOMAL SUBUNIT PROTEIN UL1M"/>
    <property type="match status" value="1"/>
</dbReference>
<dbReference type="Pfam" id="PF00687">
    <property type="entry name" value="Ribosomal_L1"/>
    <property type="match status" value="1"/>
</dbReference>
<dbReference type="PIRSF" id="PIRSF002155">
    <property type="entry name" value="Ribosomal_L1"/>
    <property type="match status" value="1"/>
</dbReference>
<dbReference type="SUPFAM" id="SSF56808">
    <property type="entry name" value="Ribosomal protein L1"/>
    <property type="match status" value="1"/>
</dbReference>
<dbReference type="PROSITE" id="PS01199">
    <property type="entry name" value="RIBOSOMAL_L1"/>
    <property type="match status" value="1"/>
</dbReference>
<protein>
    <recommendedName>
        <fullName evidence="1">Large ribosomal subunit protein uL1</fullName>
    </recommendedName>
    <alternativeName>
        <fullName evidence="2">50S ribosomal protein L1</fullName>
    </alternativeName>
</protein>
<keyword id="KW-0678">Repressor</keyword>
<keyword id="KW-0687">Ribonucleoprotein</keyword>
<keyword id="KW-0689">Ribosomal protein</keyword>
<keyword id="KW-0694">RNA-binding</keyword>
<keyword id="KW-0699">rRNA-binding</keyword>
<keyword id="KW-0810">Translation regulation</keyword>
<keyword id="KW-0820">tRNA-binding</keyword>
<proteinExistence type="inferred from homology"/>
<sequence>MQRGKKYRAHKEKVDSTKFFSIDKAVELAKSTSYTKFDGTLEIATKVNYKSLQNIRGTISLPHGTGKKIRVLVFCKGDKQNDAKAAGADFVGDTDLIEKVAGGWTDFDACVATPDMMKDVGKLGPILGRKGLMPKPKAGTVTTDVAKAVNELKAGRIEYRPDKGGVVHLGVGKVSFDNTKLIENIRTVVQTLMRDKPSDAKGEYLKTFSISPTMGVGVKVDVKELVNTSI</sequence>
<feature type="chain" id="PRO_0000125677" description="Large ribosomal subunit protein uL1">
    <location>
        <begin position="1"/>
        <end position="230"/>
    </location>
</feature>
<name>RL1_LEPIC</name>
<evidence type="ECO:0000255" key="1">
    <source>
        <dbReference type="HAMAP-Rule" id="MF_01318"/>
    </source>
</evidence>
<evidence type="ECO:0000305" key="2"/>
<accession>Q72UB1</accession>
<gene>
    <name evidence="1" type="primary">rplA</name>
    <name type="ordered locus">LIC_10750</name>
</gene>
<organism>
    <name type="scientific">Leptospira interrogans serogroup Icterohaemorrhagiae serovar copenhageni (strain Fiocruz L1-130)</name>
    <dbReference type="NCBI Taxonomy" id="267671"/>
    <lineage>
        <taxon>Bacteria</taxon>
        <taxon>Pseudomonadati</taxon>
        <taxon>Spirochaetota</taxon>
        <taxon>Spirochaetia</taxon>
        <taxon>Leptospirales</taxon>
        <taxon>Leptospiraceae</taxon>
        <taxon>Leptospira</taxon>
    </lineage>
</organism>